<reference key="1">
    <citation type="submission" date="2004-11" db="EMBL/GenBank/DDBJ databases">
        <authorList>
            <consortium name="The German cDNA consortium"/>
        </authorList>
    </citation>
    <scope>NUCLEOTIDE SEQUENCE [LARGE SCALE MRNA]</scope>
    <source>
        <tissue>Brain cortex</tissue>
    </source>
</reference>
<protein>
    <recommendedName>
        <fullName evidence="2">Solute carrier family 38 member 10</fullName>
    </recommendedName>
    <alternativeName>
        <fullName evidence="2">Amino acid transporter SLC38A10</fullName>
    </alternativeName>
</protein>
<dbReference type="EMBL" id="CR858381">
    <property type="protein sequence ID" value="CAH90609.1"/>
    <property type="molecule type" value="mRNA"/>
</dbReference>
<dbReference type="RefSeq" id="NP_001125330.1">
    <property type="nucleotide sequence ID" value="NM_001131858.1"/>
</dbReference>
<dbReference type="SMR" id="Q5RC98"/>
<dbReference type="FunCoup" id="Q5RC98">
    <property type="interactions" value="863"/>
</dbReference>
<dbReference type="STRING" id="9601.ENSPPYP00000009800"/>
<dbReference type="GeneID" id="100172229"/>
<dbReference type="KEGG" id="pon:100172229"/>
<dbReference type="CTD" id="124565"/>
<dbReference type="InParanoid" id="Q5RC98"/>
<dbReference type="OrthoDB" id="513400at2759"/>
<dbReference type="Proteomes" id="UP000001595">
    <property type="component" value="Unplaced"/>
</dbReference>
<dbReference type="GO" id="GO:0016020">
    <property type="term" value="C:membrane"/>
    <property type="evidence" value="ECO:0007669"/>
    <property type="project" value="UniProtKB-SubCell"/>
</dbReference>
<dbReference type="GO" id="GO:0015179">
    <property type="term" value="F:L-amino acid transmembrane transporter activity"/>
    <property type="evidence" value="ECO:0007669"/>
    <property type="project" value="TreeGrafter"/>
</dbReference>
<dbReference type="InterPro" id="IPR013057">
    <property type="entry name" value="AA_transpt_TM"/>
</dbReference>
<dbReference type="PANTHER" id="PTHR22950">
    <property type="entry name" value="AMINO ACID TRANSPORTER"/>
    <property type="match status" value="1"/>
</dbReference>
<dbReference type="PANTHER" id="PTHR22950:SF646">
    <property type="entry name" value="SODIUM-COUPLED NEUTRAL AMINO ACID TRANSPORTER 10-RELATED"/>
    <property type="match status" value="1"/>
</dbReference>
<dbReference type="Pfam" id="PF01490">
    <property type="entry name" value="Aa_trans"/>
    <property type="match status" value="1"/>
</dbReference>
<gene>
    <name evidence="2" type="primary">SLC38A10</name>
</gene>
<proteinExistence type="evidence at transcript level"/>
<name>S38AA_PONAB</name>
<comment type="function">
    <text evidence="2">Facilitates bidirectional transport of amino acids. May act as a glutamate sensor that regulates glutamate-glutamine cycle and mTOR signaling in the brain. The transport mechanism remains to be elucidated.</text>
</comment>
<comment type="catalytic activity">
    <reaction evidence="2">
        <text>L-glutamate(out) = L-glutamate(in)</text>
        <dbReference type="Rhea" id="RHEA:66336"/>
        <dbReference type="ChEBI" id="CHEBI:29985"/>
    </reaction>
    <physiologicalReaction direction="left-to-right" evidence="2">
        <dbReference type="Rhea" id="RHEA:66337"/>
    </physiologicalReaction>
    <physiologicalReaction direction="right-to-left" evidence="2">
        <dbReference type="Rhea" id="RHEA:66338"/>
    </physiologicalReaction>
</comment>
<comment type="catalytic activity">
    <reaction evidence="2">
        <text>L-glutamine(out) = L-glutamine(in)</text>
        <dbReference type="Rhea" id="RHEA:73419"/>
        <dbReference type="ChEBI" id="CHEBI:58359"/>
    </reaction>
    <physiologicalReaction direction="left-to-right" evidence="2">
        <dbReference type="Rhea" id="RHEA:73420"/>
    </physiologicalReaction>
    <physiologicalReaction direction="right-to-left" evidence="2">
        <dbReference type="Rhea" id="RHEA:73421"/>
    </physiologicalReaction>
</comment>
<comment type="catalytic activity">
    <reaction evidence="2">
        <text>L-alanine(in) = L-alanine(out)</text>
        <dbReference type="Rhea" id="RHEA:70719"/>
        <dbReference type="ChEBI" id="CHEBI:57972"/>
    </reaction>
    <physiologicalReaction direction="left-to-right" evidence="2">
        <dbReference type="Rhea" id="RHEA:70720"/>
    </physiologicalReaction>
    <physiologicalReaction direction="right-to-left" evidence="2">
        <dbReference type="Rhea" id="RHEA:70721"/>
    </physiologicalReaction>
</comment>
<comment type="catalytic activity">
    <reaction evidence="2">
        <text>L-serine(in) = L-serine(out)</text>
        <dbReference type="Rhea" id="RHEA:35031"/>
        <dbReference type="ChEBI" id="CHEBI:33384"/>
    </reaction>
    <physiologicalReaction direction="left-to-right" evidence="2">
        <dbReference type="Rhea" id="RHEA:35032"/>
    </physiologicalReaction>
</comment>
<comment type="catalytic activity">
    <reaction evidence="2">
        <text>L-leucine(in) = L-leucine(out)</text>
        <dbReference type="Rhea" id="RHEA:73011"/>
        <dbReference type="ChEBI" id="CHEBI:57427"/>
    </reaction>
    <physiologicalReaction direction="right-to-left" evidence="2">
        <dbReference type="Rhea" id="RHEA:73013"/>
    </physiologicalReaction>
</comment>
<comment type="subcellular location">
    <subcellularLocation>
        <location evidence="6">Membrane</location>
        <topology evidence="6">Multi-pass membrane protein</topology>
    </subcellularLocation>
</comment>
<comment type="similarity">
    <text evidence="6">Belongs to the amino acid/polyamine transporter 2 family.</text>
</comment>
<evidence type="ECO:0000250" key="1">
    <source>
        <dbReference type="UniProtKB" id="E9PT23"/>
    </source>
</evidence>
<evidence type="ECO:0000250" key="2">
    <source>
        <dbReference type="UniProtKB" id="Q5I012"/>
    </source>
</evidence>
<evidence type="ECO:0000250" key="3">
    <source>
        <dbReference type="UniProtKB" id="Q9HBR0"/>
    </source>
</evidence>
<evidence type="ECO:0000255" key="4"/>
<evidence type="ECO:0000256" key="5">
    <source>
        <dbReference type="SAM" id="MobiDB-lite"/>
    </source>
</evidence>
<evidence type="ECO:0000305" key="6"/>
<accession>Q5RC98</accession>
<keyword id="KW-0029">Amino-acid transport</keyword>
<keyword id="KW-0472">Membrane</keyword>
<keyword id="KW-0597">Phosphoprotein</keyword>
<keyword id="KW-1185">Reference proteome</keyword>
<keyword id="KW-0812">Transmembrane</keyword>
<keyword id="KW-1133">Transmembrane helix</keyword>
<keyword id="KW-0813">Transport</keyword>
<sequence>MTAAAASNWGLITNIVNSIVGVSVLTMPFCFKQCGIVLGALLLVFCSWMTHQSCMFLVKSASLSKRRTYAGLAFHAYGKAGKMLVETSMIGLMLGTCIAFYVVIGDLGSNFFARLFGFQVGGTFRMFLLFAVSLCIVLPLSLQRNMMASIQSFSAMALLFYTVFMFVIVLSSLKHGLFSGQWLRRVSYVRWEGVFRCIPIFGMSFACQSQVLPTYDSLDEPSVKTMSSIFASSLNVVTTFYVMVGFFGYVSFTEATAGNVLMHFPSNLVTEMLRVGFMMSVAVGFPMMILPCRQALSTLLCEQQQKDGTFAAGGYMPPLRFKALTLSVVFGTMVGGILIPNVETILGLTGATMGSLICFICPALIYKKIHKNALSSQVVLWVGLGILVVSTVTTLSVSEDVPEDLAEEAPGGRLGEAEGLMKVEAARLSAQDPVVAVAEDGREKPKLPKEREELEQAQIKGPVDVPGREDGKEAQEEAQLDRPGQGIAVPVGEAHRHEPPVPHDKVVVDEGQDQEVPEENKPPSRHAGRKAPGVQGQMAPPLPDSEREKREPEQGEVGKRPGQAQALEEAGDLPEDPQKVPEADGQPAVQPAKEDLEPGDGGLHPRPQAVLSEQQNGLAVDEGEKAEGVPPPGNAAGDTGQPAEDSDHGGKPPLPEEKPAPGAGLPPEPREQRDVERAGGDQAASQLEEAGRAEMLDHAVLLQVIKEQQVQQKRLLDQQEKLLAVIEEQHKEIHQQRQEDEEDKPRQVEVHPEPGAAVPRGQEAPEGKARETMENLPPLPLDPVLRAPGGRPAPSQDLNQRSLEHPERPVGRDPAGPPDGGPDTEPRAAQAKPRDGQKDAAPGAAGTVKELLKGLEQVPVPDPAREAGGPEERLAEEFPGQSQDVTGGGSQDRKKPGKEVAATGTGILKEANWLVAGPGAEMGDPHMKPKQMSRDLGLAVDLPGGAEGAAAQPQAVLRQPELRVISDGEQGGQQGHRLDHGGYLEMRKEARGGDHMPVSHEQLGGEEDAAVPEPRQRPEPELGLKQAVPGGQRPDNAKPNRDLKLQAGSDLRRRRRDLGPHAEGELAPRDRVIIGLNPLPDVQVNDLRGALDAQLRQAAGGALQVVHSRQLRQAPGAPEES</sequence>
<organism>
    <name type="scientific">Pongo abelii</name>
    <name type="common">Sumatran orangutan</name>
    <name type="synonym">Pongo pygmaeus abelii</name>
    <dbReference type="NCBI Taxonomy" id="9601"/>
    <lineage>
        <taxon>Eukaryota</taxon>
        <taxon>Metazoa</taxon>
        <taxon>Chordata</taxon>
        <taxon>Craniata</taxon>
        <taxon>Vertebrata</taxon>
        <taxon>Euteleostomi</taxon>
        <taxon>Mammalia</taxon>
        <taxon>Eutheria</taxon>
        <taxon>Euarchontoglires</taxon>
        <taxon>Primates</taxon>
        <taxon>Haplorrhini</taxon>
        <taxon>Catarrhini</taxon>
        <taxon>Hominidae</taxon>
        <taxon>Pongo</taxon>
    </lineage>
</organism>
<feature type="chain" id="PRO_0000318977" description="Solute carrier family 38 member 10">
    <location>
        <begin position="1"/>
        <end position="1121"/>
    </location>
</feature>
<feature type="transmembrane region" description="Helical" evidence="4">
    <location>
        <begin position="4"/>
        <end position="24"/>
    </location>
</feature>
<feature type="transmembrane region" description="Helical" evidence="4">
    <location>
        <begin position="36"/>
        <end position="58"/>
    </location>
</feature>
<feature type="transmembrane region" description="Helical" evidence="4">
    <location>
        <begin position="84"/>
        <end position="104"/>
    </location>
</feature>
<feature type="transmembrane region" description="Helical" evidence="4">
    <location>
        <begin position="120"/>
        <end position="140"/>
    </location>
</feature>
<feature type="transmembrane region" description="Helical" evidence="4">
    <location>
        <begin position="153"/>
        <end position="173"/>
    </location>
</feature>
<feature type="transmembrane region" description="Helical" evidence="4">
    <location>
        <begin position="229"/>
        <end position="249"/>
    </location>
</feature>
<feature type="transmembrane region" description="Helical" evidence="4">
    <location>
        <begin position="272"/>
        <end position="292"/>
    </location>
</feature>
<feature type="transmembrane region" description="Helical" evidence="4">
    <location>
        <begin position="323"/>
        <end position="343"/>
    </location>
</feature>
<feature type="transmembrane region" description="Helical" evidence="4">
    <location>
        <begin position="345"/>
        <end position="365"/>
    </location>
</feature>
<feature type="transmembrane region" description="Helical" evidence="4">
    <location>
        <begin position="378"/>
        <end position="398"/>
    </location>
</feature>
<feature type="region of interest" description="Disordered" evidence="5">
    <location>
        <begin position="434"/>
        <end position="691"/>
    </location>
</feature>
<feature type="region of interest" description="Disordered" evidence="5">
    <location>
        <begin position="731"/>
        <end position="904"/>
    </location>
</feature>
<feature type="region of interest" description="Disordered" evidence="5">
    <location>
        <begin position="965"/>
        <end position="1068"/>
    </location>
</feature>
<feature type="compositionally biased region" description="Basic and acidic residues" evidence="5">
    <location>
        <begin position="439"/>
        <end position="454"/>
    </location>
</feature>
<feature type="compositionally biased region" description="Basic and acidic residues" evidence="5">
    <location>
        <begin position="466"/>
        <end position="475"/>
    </location>
</feature>
<feature type="compositionally biased region" description="Basic and acidic residues" evidence="5">
    <location>
        <begin position="493"/>
        <end position="508"/>
    </location>
</feature>
<feature type="compositionally biased region" description="Basic and acidic residues" evidence="5">
    <location>
        <begin position="544"/>
        <end position="559"/>
    </location>
</feature>
<feature type="compositionally biased region" description="Basic and acidic residues" evidence="5">
    <location>
        <begin position="645"/>
        <end position="659"/>
    </location>
</feature>
<feature type="compositionally biased region" description="Basic and acidic residues" evidence="5">
    <location>
        <begin position="668"/>
        <end position="679"/>
    </location>
</feature>
<feature type="compositionally biased region" description="Basic and acidic residues" evidence="5">
    <location>
        <begin position="731"/>
        <end position="752"/>
    </location>
</feature>
<feature type="compositionally biased region" description="Basic and acidic residues" evidence="5">
    <location>
        <begin position="763"/>
        <end position="773"/>
    </location>
</feature>
<feature type="compositionally biased region" description="Basic and acidic residues" evidence="5">
    <location>
        <begin position="802"/>
        <end position="811"/>
    </location>
</feature>
<feature type="compositionally biased region" description="Basic and acidic residues" evidence="5">
    <location>
        <begin position="863"/>
        <end position="876"/>
    </location>
</feature>
<feature type="compositionally biased region" description="Basic and acidic residues" evidence="5">
    <location>
        <begin position="976"/>
        <end position="998"/>
    </location>
</feature>
<feature type="compositionally biased region" description="Basic and acidic residues" evidence="5">
    <location>
        <begin position="1035"/>
        <end position="1044"/>
    </location>
</feature>
<feature type="compositionally biased region" description="Basic and acidic residues" evidence="5">
    <location>
        <begin position="1057"/>
        <end position="1068"/>
    </location>
</feature>
<feature type="modified residue" description="Phosphoserine" evidence="2">
    <location>
        <position position="612"/>
    </location>
</feature>
<feature type="modified residue" description="Phosphothreonine" evidence="3">
    <location>
        <position position="772"/>
    </location>
</feature>
<feature type="modified residue" description="Phosphoserine" evidence="3">
    <location>
        <position position="802"/>
    </location>
</feature>
<feature type="modified residue" description="Phosphoserine" evidence="1">
    <location>
        <position position="890"/>
    </location>
</feature>
<feature type="modified residue" description="Phosphoserine" evidence="3">
    <location>
        <position position="966"/>
    </location>
</feature>
<feature type="modified residue" description="Phosphoserine" evidence="3">
    <location>
        <position position="999"/>
    </location>
</feature>